<feature type="chain" id="PRO_0000111333" description="Small ribosomal subunit protein uS9">
    <location>
        <begin position="1"/>
        <end position="158"/>
    </location>
</feature>
<dbReference type="EMBL" id="AE008917">
    <property type="protein sequence ID" value="AAL52350.1"/>
    <property type="molecule type" value="Genomic_DNA"/>
</dbReference>
<dbReference type="PIR" id="AC3398">
    <property type="entry name" value="AC3398"/>
</dbReference>
<dbReference type="RefSeq" id="WP_004683599.1">
    <property type="nucleotide sequence ID" value="NZ_GG703778.1"/>
</dbReference>
<dbReference type="SMR" id="Q8YGJ0"/>
<dbReference type="GeneID" id="29594018"/>
<dbReference type="KEGG" id="bme:BMEI1169"/>
<dbReference type="KEGG" id="bmel:DK63_242"/>
<dbReference type="PATRIC" id="fig|224914.52.peg.251"/>
<dbReference type="eggNOG" id="COG0103">
    <property type="taxonomic scope" value="Bacteria"/>
</dbReference>
<dbReference type="PhylomeDB" id="Q8YGJ0"/>
<dbReference type="Proteomes" id="UP000000419">
    <property type="component" value="Chromosome I"/>
</dbReference>
<dbReference type="GO" id="GO:0022627">
    <property type="term" value="C:cytosolic small ribosomal subunit"/>
    <property type="evidence" value="ECO:0007669"/>
    <property type="project" value="TreeGrafter"/>
</dbReference>
<dbReference type="GO" id="GO:0003723">
    <property type="term" value="F:RNA binding"/>
    <property type="evidence" value="ECO:0007669"/>
    <property type="project" value="TreeGrafter"/>
</dbReference>
<dbReference type="GO" id="GO:0003735">
    <property type="term" value="F:structural constituent of ribosome"/>
    <property type="evidence" value="ECO:0007669"/>
    <property type="project" value="InterPro"/>
</dbReference>
<dbReference type="GO" id="GO:0006412">
    <property type="term" value="P:translation"/>
    <property type="evidence" value="ECO:0007669"/>
    <property type="project" value="UniProtKB-UniRule"/>
</dbReference>
<dbReference type="FunFam" id="3.30.230.10:FF:000034">
    <property type="entry name" value="30S ribosomal protein S9"/>
    <property type="match status" value="1"/>
</dbReference>
<dbReference type="Gene3D" id="3.30.230.10">
    <property type="match status" value="1"/>
</dbReference>
<dbReference type="HAMAP" id="MF_00532_B">
    <property type="entry name" value="Ribosomal_uS9_B"/>
    <property type="match status" value="1"/>
</dbReference>
<dbReference type="InterPro" id="IPR020568">
    <property type="entry name" value="Ribosomal_Su5_D2-typ_SF"/>
</dbReference>
<dbReference type="InterPro" id="IPR000754">
    <property type="entry name" value="Ribosomal_uS9"/>
</dbReference>
<dbReference type="InterPro" id="IPR023035">
    <property type="entry name" value="Ribosomal_uS9_bac/plastid"/>
</dbReference>
<dbReference type="InterPro" id="IPR020574">
    <property type="entry name" value="Ribosomal_uS9_CS"/>
</dbReference>
<dbReference type="InterPro" id="IPR014721">
    <property type="entry name" value="Ribsml_uS5_D2-typ_fold_subgr"/>
</dbReference>
<dbReference type="NCBIfam" id="NF001099">
    <property type="entry name" value="PRK00132.1"/>
    <property type="match status" value="1"/>
</dbReference>
<dbReference type="PANTHER" id="PTHR21569">
    <property type="entry name" value="RIBOSOMAL PROTEIN S9"/>
    <property type="match status" value="1"/>
</dbReference>
<dbReference type="PANTHER" id="PTHR21569:SF1">
    <property type="entry name" value="SMALL RIBOSOMAL SUBUNIT PROTEIN US9M"/>
    <property type="match status" value="1"/>
</dbReference>
<dbReference type="Pfam" id="PF00380">
    <property type="entry name" value="Ribosomal_S9"/>
    <property type="match status" value="1"/>
</dbReference>
<dbReference type="SUPFAM" id="SSF54211">
    <property type="entry name" value="Ribosomal protein S5 domain 2-like"/>
    <property type="match status" value="1"/>
</dbReference>
<dbReference type="PROSITE" id="PS00360">
    <property type="entry name" value="RIBOSOMAL_S9"/>
    <property type="match status" value="1"/>
</dbReference>
<gene>
    <name evidence="1" type="primary">rpsI</name>
    <name type="ordered locus">BMEI1169</name>
</gene>
<protein>
    <recommendedName>
        <fullName evidence="1">Small ribosomal subunit protein uS9</fullName>
    </recommendedName>
    <alternativeName>
        <fullName evidence="2">30S ribosomal protein S9</fullName>
    </alternativeName>
</protein>
<evidence type="ECO:0000255" key="1">
    <source>
        <dbReference type="HAMAP-Rule" id="MF_00532"/>
    </source>
</evidence>
<evidence type="ECO:0000305" key="2"/>
<name>RS9_BRUME</name>
<proteinExistence type="inferred from homology"/>
<sequence length="158" mass="17199">MAESINSLEELGTVAKTEAAAPVDVQKLDAQGRAYATGKRKDAVARVWVKPGTGKITVNDKEFEKYFARPVLQMILQQPIVASNRAGQFDIVATVAGGGLSGQAGAVRHGISKALTYYEPGLRTVLKKGGFLTRDSRVVERKKYGKAKARRSFQFSKR</sequence>
<organism>
    <name type="scientific">Brucella melitensis biotype 1 (strain ATCC 23456 / CCUG 17765 / NCTC 10094 / 16M)</name>
    <dbReference type="NCBI Taxonomy" id="224914"/>
    <lineage>
        <taxon>Bacteria</taxon>
        <taxon>Pseudomonadati</taxon>
        <taxon>Pseudomonadota</taxon>
        <taxon>Alphaproteobacteria</taxon>
        <taxon>Hyphomicrobiales</taxon>
        <taxon>Brucellaceae</taxon>
        <taxon>Brucella/Ochrobactrum group</taxon>
        <taxon>Brucella</taxon>
    </lineage>
</organism>
<accession>Q8YGJ0</accession>
<keyword id="KW-0687">Ribonucleoprotein</keyword>
<keyword id="KW-0689">Ribosomal protein</keyword>
<reference key="1">
    <citation type="journal article" date="2002" name="Proc. Natl. Acad. Sci. U.S.A.">
        <title>The genome sequence of the facultative intracellular pathogen Brucella melitensis.</title>
        <authorList>
            <person name="DelVecchio V.G."/>
            <person name="Kapatral V."/>
            <person name="Redkar R.J."/>
            <person name="Patra G."/>
            <person name="Mujer C."/>
            <person name="Los T."/>
            <person name="Ivanova N."/>
            <person name="Anderson I."/>
            <person name="Bhattacharyya A."/>
            <person name="Lykidis A."/>
            <person name="Reznik G."/>
            <person name="Jablonski L."/>
            <person name="Larsen N."/>
            <person name="D'Souza M."/>
            <person name="Bernal A."/>
            <person name="Mazur M."/>
            <person name="Goltsman E."/>
            <person name="Selkov E."/>
            <person name="Elzer P.H."/>
            <person name="Hagius S."/>
            <person name="O'Callaghan D."/>
            <person name="Letesson J.-J."/>
            <person name="Haselkorn R."/>
            <person name="Kyrpides N.C."/>
            <person name="Overbeek R."/>
        </authorList>
    </citation>
    <scope>NUCLEOTIDE SEQUENCE [LARGE SCALE GENOMIC DNA]</scope>
    <source>
        <strain>ATCC 23456 / CCUG 17765 / NCTC 10094 / 16M</strain>
    </source>
</reference>
<comment type="similarity">
    <text evidence="1">Belongs to the universal ribosomal protein uS9 family.</text>
</comment>